<feature type="signal peptide" evidence="2">
    <location>
        <begin position="1"/>
        <end position="22"/>
    </location>
</feature>
<feature type="propeptide" id="PRO_0000461938" evidence="7">
    <location>
        <begin position="23"/>
        <end position="37"/>
    </location>
</feature>
<feature type="chain" id="PRO_0000461939" description="ILP-Ap04 A chain" evidence="7">
    <location>
        <begin position="38"/>
        <end position="65"/>
    </location>
</feature>
<feature type="chain" id="PRO_0000461940" description="ILP-Ap04 B chain" evidence="7">
    <location>
        <begin position="66"/>
        <end position="85"/>
    </location>
</feature>
<feature type="propeptide" id="PRO_0000461941" description="C peptide" evidence="7">
    <location>
        <begin position="86"/>
        <end position="106"/>
    </location>
</feature>
<feature type="disulfide bond" evidence="1">
    <location>
        <begin position="45"/>
        <end position="50"/>
    </location>
</feature>
<feature type="disulfide bond" description="Interchain (between B and A chains)" evidence="1">
    <location>
        <begin position="46"/>
        <end position="80"/>
    </location>
</feature>
<feature type="disulfide bond" description="Interchain (between B and A chains)" evidence="1">
    <location>
        <begin position="59"/>
        <end position="68"/>
    </location>
</feature>
<reference key="1">
    <citation type="journal article" date="2022" name="Front. Mar. Sci.">
        <title>Transcriptome sequencing of the pale anemones (Exaiptasia diaphana) revealed functional peptide gene resources of sea anemone.</title>
        <authorList>
            <person name="Fu J."/>
            <person name="He Y."/>
            <person name="Peng C."/>
            <person name="Tang T."/>
            <person name="Jin A."/>
            <person name="Liao Y."/>
            <person name="Shi Q."/>
            <person name="Gao B."/>
        </authorList>
    </citation>
    <scope>NUCLEOTIDE SEQUENCE [LARGE SCALE MRNA]</scope>
</reference>
<reference key="2">
    <citation type="journal article" date="2024" name="Mar. Drugs">
        <title>Synthesis and hypoglycemic effect of insulin from the venom of sea anemone Exaiptasia diaphana.</title>
        <authorList>
            <person name="Guo Q."/>
            <person name="Tang T."/>
            <person name="Lu J."/>
            <person name="Huang M."/>
            <person name="Zhang J."/>
            <person name="Ma L."/>
            <person name="Gao B."/>
        </authorList>
    </citation>
    <scope>FUNCTION</scope>
    <scope>SYNTHESIS OF 38-65 AND 66-85</scope>
    <scope>BIOASSAY</scope>
</reference>
<protein>
    <recommendedName>
        <fullName evidence="4 5">Insulin-like peptide 04</fullName>
        <shortName evidence="4 5">ILP-Ap04</shortName>
    </recommendedName>
    <component>
        <recommendedName>
            <fullName evidence="4 5">ILP-Ap04 B chain</fullName>
        </recommendedName>
    </component>
    <component>
        <recommendedName>
            <fullName evidence="4 5">ILP-Ap04 A chain</fullName>
        </recommendedName>
    </component>
</protein>
<name>INS4_EXADI</name>
<accession>P0DRI2</accession>
<keyword id="KW-0119">Carbohydrate metabolism</keyword>
<keyword id="KW-1015">Disulfide bond</keyword>
<keyword id="KW-0313">Glucose metabolism</keyword>
<keyword id="KW-0372">Hormone</keyword>
<keyword id="KW-1185">Reference proteome</keyword>
<keyword id="KW-0964">Secreted</keyword>
<keyword id="KW-0732">Signal</keyword>
<sequence length="106" mass="12291">MPRTFLVVLIYILAGFLCSTSALRKVNEASGIKTDGSGYTIVEECCTESCKLEEVNEYCHLFRGRFFCGEQILDIYNTVCNPRSIRRKRSLTVDKREAKKFIRQRR</sequence>
<evidence type="ECO:0000250" key="1">
    <source>
        <dbReference type="UniProtKB" id="P01308"/>
    </source>
</evidence>
<evidence type="ECO:0000255" key="2"/>
<evidence type="ECO:0000269" key="3">
    <source>
    </source>
</evidence>
<evidence type="ECO:0000303" key="4">
    <source>
    </source>
</evidence>
<evidence type="ECO:0000303" key="5">
    <source ref="1"/>
</evidence>
<evidence type="ECO:0000305" key="6"/>
<evidence type="ECO:0000305" key="7">
    <source ref="1"/>
</evidence>
<dbReference type="Proteomes" id="UP000887567">
    <property type="component" value="Unplaced"/>
</dbReference>
<dbReference type="Gene3D" id="1.10.100.10">
    <property type="entry name" value="Insulin-like"/>
    <property type="match status" value="1"/>
</dbReference>
<dbReference type="InterPro" id="IPR016179">
    <property type="entry name" value="Insulin-like"/>
</dbReference>
<dbReference type="InterPro" id="IPR036438">
    <property type="entry name" value="Insulin-like_sf"/>
</dbReference>
<dbReference type="InterPro" id="IPR022353">
    <property type="entry name" value="Insulin_CS"/>
</dbReference>
<dbReference type="Pfam" id="PF00049">
    <property type="entry name" value="Insulin"/>
    <property type="match status" value="1"/>
</dbReference>
<dbReference type="SUPFAM" id="SSF56994">
    <property type="entry name" value="Insulin-like"/>
    <property type="match status" value="1"/>
</dbReference>
<dbReference type="PROSITE" id="PS00262">
    <property type="entry name" value="INSULIN"/>
    <property type="match status" value="1"/>
</dbReference>
<organism>
    <name type="scientific">Exaiptasia diaphana</name>
    <name type="common">Tropical sea anemone</name>
    <name type="synonym">Aiptasia pulchella</name>
    <dbReference type="NCBI Taxonomy" id="2652724"/>
    <lineage>
        <taxon>Eukaryota</taxon>
        <taxon>Metazoa</taxon>
        <taxon>Cnidaria</taxon>
        <taxon>Anthozoa</taxon>
        <taxon>Hexacorallia</taxon>
        <taxon>Actiniaria</taxon>
        <taxon>Aiptasiidae</taxon>
        <taxon>Exaiptasia</taxon>
    </lineage>
</organism>
<proteinExistence type="inferred from homology"/>
<comment type="function">
    <text evidence="1 3">Insulin decreases blood glucose concentration (By similarity). May have evolved to activate insulin receptors (INSR) in vertebrates (PubMed:38535452). Molecular docking studies reveals unique interaction with the human insulin receptor (PubMed:38535452). In vivo, insulin-like peptide injection reduces blood glucose levels in two models of zebrafish diabetes (streptozotocin- and glucose-induced) (PubMed:38535452). Also shorter swimming distance of zebrafish larvae, an effect which is not observed with human insulin (PubMed:38535452).</text>
</comment>
<comment type="subcellular location">
    <subcellularLocation>
        <location evidence="7">Secreted</location>
    </subcellularLocation>
</comment>
<comment type="similarity">
    <text evidence="6">Belongs to the insulin family.</text>
</comment>
<comment type="online information" name="National Center for Biotechnology Information (NCBI)">
    <link uri="https://www.ncbi.nlm.nih.gov/sra/?term=SRP303227"/>
</comment>